<dbReference type="EC" id="6.3.4.4" evidence="1"/>
<dbReference type="EMBL" id="CP000230">
    <property type="protein sequence ID" value="ABC21907.1"/>
    <property type="molecule type" value="Genomic_DNA"/>
</dbReference>
<dbReference type="RefSeq" id="WP_011388861.1">
    <property type="nucleotide sequence ID" value="NC_007643.1"/>
</dbReference>
<dbReference type="RefSeq" id="YP_426194.1">
    <property type="nucleotide sequence ID" value="NC_007643.1"/>
</dbReference>
<dbReference type="SMR" id="Q2RVD8"/>
<dbReference type="STRING" id="269796.Rru_A1106"/>
<dbReference type="EnsemblBacteria" id="ABC21907">
    <property type="protein sequence ID" value="ABC21907"/>
    <property type="gene ID" value="Rru_A1106"/>
</dbReference>
<dbReference type="KEGG" id="rru:Rru_A1106"/>
<dbReference type="PATRIC" id="fig|269796.9.peg.1164"/>
<dbReference type="eggNOG" id="COG0104">
    <property type="taxonomic scope" value="Bacteria"/>
</dbReference>
<dbReference type="HOGENOM" id="CLU_029848_0_0_5"/>
<dbReference type="PhylomeDB" id="Q2RVD8"/>
<dbReference type="UniPathway" id="UPA00075">
    <property type="reaction ID" value="UER00335"/>
</dbReference>
<dbReference type="Proteomes" id="UP000001929">
    <property type="component" value="Chromosome"/>
</dbReference>
<dbReference type="GO" id="GO:0005737">
    <property type="term" value="C:cytoplasm"/>
    <property type="evidence" value="ECO:0007669"/>
    <property type="project" value="UniProtKB-SubCell"/>
</dbReference>
<dbReference type="GO" id="GO:0004019">
    <property type="term" value="F:adenylosuccinate synthase activity"/>
    <property type="evidence" value="ECO:0007669"/>
    <property type="project" value="UniProtKB-UniRule"/>
</dbReference>
<dbReference type="GO" id="GO:0005525">
    <property type="term" value="F:GTP binding"/>
    <property type="evidence" value="ECO:0007669"/>
    <property type="project" value="UniProtKB-UniRule"/>
</dbReference>
<dbReference type="GO" id="GO:0000287">
    <property type="term" value="F:magnesium ion binding"/>
    <property type="evidence" value="ECO:0007669"/>
    <property type="project" value="UniProtKB-UniRule"/>
</dbReference>
<dbReference type="GO" id="GO:0044208">
    <property type="term" value="P:'de novo' AMP biosynthetic process"/>
    <property type="evidence" value="ECO:0007669"/>
    <property type="project" value="UniProtKB-UniRule"/>
</dbReference>
<dbReference type="GO" id="GO:0046040">
    <property type="term" value="P:IMP metabolic process"/>
    <property type="evidence" value="ECO:0007669"/>
    <property type="project" value="TreeGrafter"/>
</dbReference>
<dbReference type="CDD" id="cd03108">
    <property type="entry name" value="AdSS"/>
    <property type="match status" value="1"/>
</dbReference>
<dbReference type="FunFam" id="1.10.300.10:FF:000001">
    <property type="entry name" value="Adenylosuccinate synthetase"/>
    <property type="match status" value="1"/>
</dbReference>
<dbReference type="FunFam" id="3.90.170.10:FF:000001">
    <property type="entry name" value="Adenylosuccinate synthetase"/>
    <property type="match status" value="1"/>
</dbReference>
<dbReference type="Gene3D" id="3.40.440.10">
    <property type="entry name" value="Adenylosuccinate Synthetase, subunit A, domain 1"/>
    <property type="match status" value="1"/>
</dbReference>
<dbReference type="Gene3D" id="1.10.300.10">
    <property type="entry name" value="Adenylosuccinate Synthetase, subunit A, domain 2"/>
    <property type="match status" value="1"/>
</dbReference>
<dbReference type="Gene3D" id="3.90.170.10">
    <property type="entry name" value="Adenylosuccinate Synthetase, subunit A, domain 3"/>
    <property type="match status" value="1"/>
</dbReference>
<dbReference type="HAMAP" id="MF_00011">
    <property type="entry name" value="Adenylosucc_synth"/>
    <property type="match status" value="1"/>
</dbReference>
<dbReference type="InterPro" id="IPR018220">
    <property type="entry name" value="Adenylosuccin_syn_GTP-bd"/>
</dbReference>
<dbReference type="InterPro" id="IPR033128">
    <property type="entry name" value="Adenylosuccin_syn_Lys_AS"/>
</dbReference>
<dbReference type="InterPro" id="IPR042109">
    <property type="entry name" value="Adenylosuccinate_synth_dom1"/>
</dbReference>
<dbReference type="InterPro" id="IPR042110">
    <property type="entry name" value="Adenylosuccinate_synth_dom2"/>
</dbReference>
<dbReference type="InterPro" id="IPR042111">
    <property type="entry name" value="Adenylosuccinate_synth_dom3"/>
</dbReference>
<dbReference type="InterPro" id="IPR001114">
    <property type="entry name" value="Adenylosuccinate_synthetase"/>
</dbReference>
<dbReference type="InterPro" id="IPR027417">
    <property type="entry name" value="P-loop_NTPase"/>
</dbReference>
<dbReference type="NCBIfam" id="NF002223">
    <property type="entry name" value="PRK01117.1"/>
    <property type="match status" value="1"/>
</dbReference>
<dbReference type="NCBIfam" id="TIGR00184">
    <property type="entry name" value="purA"/>
    <property type="match status" value="1"/>
</dbReference>
<dbReference type="PANTHER" id="PTHR11846">
    <property type="entry name" value="ADENYLOSUCCINATE SYNTHETASE"/>
    <property type="match status" value="1"/>
</dbReference>
<dbReference type="PANTHER" id="PTHR11846:SF0">
    <property type="entry name" value="ADENYLOSUCCINATE SYNTHETASE"/>
    <property type="match status" value="1"/>
</dbReference>
<dbReference type="Pfam" id="PF00709">
    <property type="entry name" value="Adenylsucc_synt"/>
    <property type="match status" value="1"/>
</dbReference>
<dbReference type="SMART" id="SM00788">
    <property type="entry name" value="Adenylsucc_synt"/>
    <property type="match status" value="1"/>
</dbReference>
<dbReference type="SUPFAM" id="SSF52540">
    <property type="entry name" value="P-loop containing nucleoside triphosphate hydrolases"/>
    <property type="match status" value="1"/>
</dbReference>
<dbReference type="PROSITE" id="PS01266">
    <property type="entry name" value="ADENYLOSUCCIN_SYN_1"/>
    <property type="match status" value="1"/>
</dbReference>
<dbReference type="PROSITE" id="PS00513">
    <property type="entry name" value="ADENYLOSUCCIN_SYN_2"/>
    <property type="match status" value="1"/>
</dbReference>
<comment type="function">
    <text evidence="1">Plays an important role in the de novo pathway of purine nucleotide biosynthesis. Catalyzes the first committed step in the biosynthesis of AMP from IMP.</text>
</comment>
<comment type="catalytic activity">
    <reaction evidence="1">
        <text>IMP + L-aspartate + GTP = N(6)-(1,2-dicarboxyethyl)-AMP + GDP + phosphate + 2 H(+)</text>
        <dbReference type="Rhea" id="RHEA:15753"/>
        <dbReference type="ChEBI" id="CHEBI:15378"/>
        <dbReference type="ChEBI" id="CHEBI:29991"/>
        <dbReference type="ChEBI" id="CHEBI:37565"/>
        <dbReference type="ChEBI" id="CHEBI:43474"/>
        <dbReference type="ChEBI" id="CHEBI:57567"/>
        <dbReference type="ChEBI" id="CHEBI:58053"/>
        <dbReference type="ChEBI" id="CHEBI:58189"/>
        <dbReference type="EC" id="6.3.4.4"/>
    </reaction>
</comment>
<comment type="cofactor">
    <cofactor evidence="1">
        <name>Mg(2+)</name>
        <dbReference type="ChEBI" id="CHEBI:18420"/>
    </cofactor>
    <text evidence="1">Binds 1 Mg(2+) ion per subunit.</text>
</comment>
<comment type="pathway">
    <text evidence="1">Purine metabolism; AMP biosynthesis via de novo pathway; AMP from IMP: step 1/2.</text>
</comment>
<comment type="subunit">
    <text evidence="1">Homodimer.</text>
</comment>
<comment type="subcellular location">
    <subcellularLocation>
        <location evidence="1">Cytoplasm</location>
    </subcellularLocation>
</comment>
<comment type="similarity">
    <text evidence="1">Belongs to the adenylosuccinate synthetase family.</text>
</comment>
<keyword id="KW-0963">Cytoplasm</keyword>
<keyword id="KW-0342">GTP-binding</keyword>
<keyword id="KW-0436">Ligase</keyword>
<keyword id="KW-0460">Magnesium</keyword>
<keyword id="KW-0479">Metal-binding</keyword>
<keyword id="KW-0547">Nucleotide-binding</keyword>
<keyword id="KW-0658">Purine biosynthesis</keyword>
<keyword id="KW-1185">Reference proteome</keyword>
<feature type="chain" id="PRO_1000000908" description="Adenylosuccinate synthetase">
    <location>
        <begin position="1"/>
        <end position="429"/>
    </location>
</feature>
<feature type="active site" description="Proton acceptor" evidence="1">
    <location>
        <position position="13"/>
    </location>
</feature>
<feature type="active site" description="Proton donor" evidence="1">
    <location>
        <position position="41"/>
    </location>
</feature>
<feature type="binding site" evidence="1">
    <location>
        <begin position="12"/>
        <end position="18"/>
    </location>
    <ligand>
        <name>GTP</name>
        <dbReference type="ChEBI" id="CHEBI:37565"/>
    </ligand>
</feature>
<feature type="binding site" description="in other chain" evidence="1">
    <location>
        <begin position="13"/>
        <end position="16"/>
    </location>
    <ligand>
        <name>IMP</name>
        <dbReference type="ChEBI" id="CHEBI:58053"/>
        <note>ligand shared between dimeric partners</note>
    </ligand>
</feature>
<feature type="binding site" evidence="1">
    <location>
        <position position="13"/>
    </location>
    <ligand>
        <name>Mg(2+)</name>
        <dbReference type="ChEBI" id="CHEBI:18420"/>
    </ligand>
</feature>
<feature type="binding site" description="in other chain" evidence="1">
    <location>
        <begin position="38"/>
        <end position="41"/>
    </location>
    <ligand>
        <name>IMP</name>
        <dbReference type="ChEBI" id="CHEBI:58053"/>
        <note>ligand shared between dimeric partners</note>
    </ligand>
</feature>
<feature type="binding site" evidence="1">
    <location>
        <begin position="40"/>
        <end position="42"/>
    </location>
    <ligand>
        <name>GTP</name>
        <dbReference type="ChEBI" id="CHEBI:37565"/>
    </ligand>
</feature>
<feature type="binding site" evidence="1">
    <location>
        <position position="40"/>
    </location>
    <ligand>
        <name>Mg(2+)</name>
        <dbReference type="ChEBI" id="CHEBI:18420"/>
    </ligand>
</feature>
<feature type="binding site" description="in other chain" evidence="1">
    <location>
        <position position="129"/>
    </location>
    <ligand>
        <name>IMP</name>
        <dbReference type="ChEBI" id="CHEBI:58053"/>
        <note>ligand shared between dimeric partners</note>
    </ligand>
</feature>
<feature type="binding site" evidence="1">
    <location>
        <position position="143"/>
    </location>
    <ligand>
        <name>IMP</name>
        <dbReference type="ChEBI" id="CHEBI:58053"/>
        <note>ligand shared between dimeric partners</note>
    </ligand>
</feature>
<feature type="binding site" description="in other chain" evidence="1">
    <location>
        <position position="223"/>
    </location>
    <ligand>
        <name>IMP</name>
        <dbReference type="ChEBI" id="CHEBI:58053"/>
        <note>ligand shared between dimeric partners</note>
    </ligand>
</feature>
<feature type="binding site" description="in other chain" evidence="1">
    <location>
        <position position="238"/>
    </location>
    <ligand>
        <name>IMP</name>
        <dbReference type="ChEBI" id="CHEBI:58053"/>
        <note>ligand shared between dimeric partners</note>
    </ligand>
</feature>
<feature type="binding site" evidence="1">
    <location>
        <begin position="298"/>
        <end position="304"/>
    </location>
    <ligand>
        <name>substrate</name>
    </ligand>
</feature>
<feature type="binding site" description="in other chain" evidence="1">
    <location>
        <position position="302"/>
    </location>
    <ligand>
        <name>IMP</name>
        <dbReference type="ChEBI" id="CHEBI:58053"/>
        <note>ligand shared between dimeric partners</note>
    </ligand>
</feature>
<feature type="binding site" evidence="1">
    <location>
        <position position="304"/>
    </location>
    <ligand>
        <name>GTP</name>
        <dbReference type="ChEBI" id="CHEBI:37565"/>
    </ligand>
</feature>
<feature type="binding site" evidence="1">
    <location>
        <begin position="330"/>
        <end position="332"/>
    </location>
    <ligand>
        <name>GTP</name>
        <dbReference type="ChEBI" id="CHEBI:37565"/>
    </ligand>
</feature>
<feature type="binding site" evidence="1">
    <location>
        <begin position="412"/>
        <end position="414"/>
    </location>
    <ligand>
        <name>GTP</name>
        <dbReference type="ChEBI" id="CHEBI:37565"/>
    </ligand>
</feature>
<gene>
    <name evidence="1" type="primary">purA</name>
    <name type="ordered locus">Rru_A1106</name>
</gene>
<proteinExistence type="inferred from homology"/>
<sequence>MSNVAVVGSQWGDEGKGKVVDWLAERADVVVRFQGGHNAGHTLVVDGVTYKLSLLPSGAVRGKLSIIGNGVVVDPWALFEEIERVAAQGVVITPEGLRIAENAVLILPLHGNLDRAREAAAGNAKIGTTGRGIGPAYEDKVARRAIRLCDLADEDVLRFKVERLLTHHNALLRGLGEPELDADSLISALLEIAPRILPFASPVWKVLDEARRAGKKILFEGAQGAMLDVDHGTYPYVTSSNTVAPNAATGAGVGPSSVGFTLGITKAYTTRVGAGPFPTELFDDIGRTIGERGREFGTVTGRPRRCGWFDAVLVRQSVLVGGLRGIALTKLDVLDGLDELKICTGYRLDGQVIDHLPASMKAQSRVEPIYETLEGWKDSTFGARSWADLPAKAIKYIRRLEELIEAPVALLSTSPEREDTILVRDPFLD</sequence>
<protein>
    <recommendedName>
        <fullName evidence="1">Adenylosuccinate synthetase</fullName>
        <shortName evidence="1">AMPSase</shortName>
        <shortName evidence="1">AdSS</shortName>
        <ecNumber evidence="1">6.3.4.4</ecNumber>
    </recommendedName>
    <alternativeName>
        <fullName evidence="1">IMP--aspartate ligase</fullName>
    </alternativeName>
</protein>
<reference key="1">
    <citation type="journal article" date="2011" name="Stand. Genomic Sci.">
        <title>Complete genome sequence of Rhodospirillum rubrum type strain (S1).</title>
        <authorList>
            <person name="Munk A.C."/>
            <person name="Copeland A."/>
            <person name="Lucas S."/>
            <person name="Lapidus A."/>
            <person name="Del Rio T.G."/>
            <person name="Barry K."/>
            <person name="Detter J.C."/>
            <person name="Hammon N."/>
            <person name="Israni S."/>
            <person name="Pitluck S."/>
            <person name="Brettin T."/>
            <person name="Bruce D."/>
            <person name="Han C."/>
            <person name="Tapia R."/>
            <person name="Gilna P."/>
            <person name="Schmutz J."/>
            <person name="Larimer F."/>
            <person name="Land M."/>
            <person name="Kyrpides N.C."/>
            <person name="Mavromatis K."/>
            <person name="Richardson P."/>
            <person name="Rohde M."/>
            <person name="Goeker M."/>
            <person name="Klenk H.P."/>
            <person name="Zhang Y."/>
            <person name="Roberts G.P."/>
            <person name="Reslewic S."/>
            <person name="Schwartz D.C."/>
        </authorList>
    </citation>
    <scope>NUCLEOTIDE SEQUENCE [LARGE SCALE GENOMIC DNA]</scope>
    <source>
        <strain>ATCC 11170 / ATH 1.1.1 / DSM 467 / LMG 4362 / NCIMB 8255 / S1</strain>
    </source>
</reference>
<evidence type="ECO:0000255" key="1">
    <source>
        <dbReference type="HAMAP-Rule" id="MF_00011"/>
    </source>
</evidence>
<name>PURA_RHORT</name>
<accession>Q2RVD8</accession>
<organism>
    <name type="scientific">Rhodospirillum rubrum (strain ATCC 11170 / ATH 1.1.1 / DSM 467 / LMG 4362 / NCIMB 8255 / S1)</name>
    <dbReference type="NCBI Taxonomy" id="269796"/>
    <lineage>
        <taxon>Bacteria</taxon>
        <taxon>Pseudomonadati</taxon>
        <taxon>Pseudomonadota</taxon>
        <taxon>Alphaproteobacteria</taxon>
        <taxon>Rhodospirillales</taxon>
        <taxon>Rhodospirillaceae</taxon>
        <taxon>Rhodospirillum</taxon>
    </lineage>
</organism>